<dbReference type="EMBL" id="AE004437">
    <property type="protein sequence ID" value="AAG20225.1"/>
    <property type="molecule type" value="Genomic_DNA"/>
</dbReference>
<dbReference type="PIR" id="E84357">
    <property type="entry name" value="E84357"/>
</dbReference>
<dbReference type="RefSeq" id="WP_010903526.1">
    <property type="nucleotide sequence ID" value="NC_002607.1"/>
</dbReference>
<dbReference type="SMR" id="Q9HNJ5"/>
<dbReference type="FunCoup" id="Q9HNJ5">
    <property type="interactions" value="59"/>
</dbReference>
<dbReference type="STRING" id="64091.VNG_2076G"/>
<dbReference type="PaxDb" id="64091-VNG_2076G"/>
<dbReference type="KEGG" id="hal:VNG_2076G"/>
<dbReference type="PATRIC" id="fig|64091.14.peg.1583"/>
<dbReference type="HOGENOM" id="CLU_205640_0_0_2"/>
<dbReference type="InParanoid" id="Q9HNJ5"/>
<dbReference type="OrthoDB" id="45138at2157"/>
<dbReference type="PhylomeDB" id="Q9HNJ5"/>
<dbReference type="Proteomes" id="UP000000554">
    <property type="component" value="Chromosome"/>
</dbReference>
<dbReference type="GO" id="GO:1990904">
    <property type="term" value="C:ribonucleoprotein complex"/>
    <property type="evidence" value="ECO:0007669"/>
    <property type="project" value="UniProtKB-KW"/>
</dbReference>
<dbReference type="GO" id="GO:0005840">
    <property type="term" value="C:ribosome"/>
    <property type="evidence" value="ECO:0007669"/>
    <property type="project" value="UniProtKB-KW"/>
</dbReference>
<dbReference type="GO" id="GO:0003735">
    <property type="term" value="F:structural constituent of ribosome"/>
    <property type="evidence" value="ECO:0007669"/>
    <property type="project" value="InterPro"/>
</dbReference>
<dbReference type="GO" id="GO:0006412">
    <property type="term" value="P:translation"/>
    <property type="evidence" value="ECO:0007669"/>
    <property type="project" value="UniProtKB-UniRule"/>
</dbReference>
<dbReference type="Gene3D" id="4.10.1060.50">
    <property type="match status" value="1"/>
</dbReference>
<dbReference type="HAMAP" id="MF_00788">
    <property type="entry name" value="Ribosomal_eL40"/>
    <property type="match status" value="1"/>
</dbReference>
<dbReference type="InterPro" id="IPR023657">
    <property type="entry name" value="Ribosomal_eL40_arc"/>
</dbReference>
<dbReference type="InterPro" id="IPR001975">
    <property type="entry name" value="Ribosomal_eL40_dom"/>
</dbReference>
<dbReference type="InterPro" id="IPR038587">
    <property type="entry name" value="Ribosomal_eL40_sf"/>
</dbReference>
<dbReference type="InterPro" id="IPR011332">
    <property type="entry name" value="Ribosomal_zn-bd"/>
</dbReference>
<dbReference type="NCBIfam" id="NF003161">
    <property type="entry name" value="PRK04136.1"/>
    <property type="match status" value="1"/>
</dbReference>
<dbReference type="PANTHER" id="PTHR39649">
    <property type="entry name" value="50S RIBOSOMAL PROTEIN L40E"/>
    <property type="match status" value="1"/>
</dbReference>
<dbReference type="PANTHER" id="PTHR39649:SF1">
    <property type="entry name" value="LARGE RIBOSOMAL SUBUNIT PROTEIN EL40"/>
    <property type="match status" value="1"/>
</dbReference>
<dbReference type="Pfam" id="PF01020">
    <property type="entry name" value="Ribosomal_L40e"/>
    <property type="match status" value="1"/>
</dbReference>
<dbReference type="SMART" id="SM01377">
    <property type="entry name" value="Ribosomal_L40e"/>
    <property type="match status" value="1"/>
</dbReference>
<dbReference type="SUPFAM" id="SSF57829">
    <property type="entry name" value="Zn-binding ribosomal proteins"/>
    <property type="match status" value="1"/>
</dbReference>
<name>RL40_HALSA</name>
<organism>
    <name type="scientific">Halobacterium salinarum (strain ATCC 700922 / JCM 11081 / NRC-1)</name>
    <name type="common">Halobacterium halobium</name>
    <dbReference type="NCBI Taxonomy" id="64091"/>
    <lineage>
        <taxon>Archaea</taxon>
        <taxon>Methanobacteriati</taxon>
        <taxon>Methanobacteriota</taxon>
        <taxon>Stenosarchaea group</taxon>
        <taxon>Halobacteria</taxon>
        <taxon>Halobacteriales</taxon>
        <taxon>Halobacteriaceae</taxon>
        <taxon>Halobacterium</taxon>
        <taxon>Halobacterium salinarum NRC-34001</taxon>
    </lineage>
</organism>
<feature type="chain" id="PRO_0000138779" description="Large ribosomal subunit protein eL40">
    <location>
        <begin position="1"/>
        <end position="47"/>
    </location>
</feature>
<evidence type="ECO:0000255" key="1">
    <source>
        <dbReference type="HAMAP-Rule" id="MF_00788"/>
    </source>
</evidence>
<evidence type="ECO:0000305" key="2"/>
<accession>Q9HNJ5</accession>
<sequence length="47" mass="5435">MSETIEDRLLNKQVCMRCNARNPTDAESCRKCGYKNLRTKASERRSA</sequence>
<comment type="similarity">
    <text evidence="1">Belongs to the eukaryotic ribosomal protein eL40 family.</text>
</comment>
<proteinExistence type="inferred from homology"/>
<keyword id="KW-1185">Reference proteome</keyword>
<keyword id="KW-0687">Ribonucleoprotein</keyword>
<keyword id="KW-0689">Ribosomal protein</keyword>
<protein>
    <recommendedName>
        <fullName evidence="1">Large ribosomal subunit protein eL40</fullName>
    </recommendedName>
    <alternativeName>
        <fullName evidence="2">50S ribosomal protein L40e</fullName>
    </alternativeName>
</protein>
<reference key="1">
    <citation type="journal article" date="2000" name="Proc. Natl. Acad. Sci. U.S.A.">
        <title>Genome sequence of Halobacterium species NRC-1.</title>
        <authorList>
            <person name="Ng W.V."/>
            <person name="Kennedy S.P."/>
            <person name="Mahairas G.G."/>
            <person name="Berquist B."/>
            <person name="Pan M."/>
            <person name="Shukla H.D."/>
            <person name="Lasky S.R."/>
            <person name="Baliga N.S."/>
            <person name="Thorsson V."/>
            <person name="Sbrogna J."/>
            <person name="Swartzell S."/>
            <person name="Weir D."/>
            <person name="Hall J."/>
            <person name="Dahl T.A."/>
            <person name="Welti R."/>
            <person name="Goo Y.A."/>
            <person name="Leithauser B."/>
            <person name="Keller K."/>
            <person name="Cruz R."/>
            <person name="Danson M.J."/>
            <person name="Hough D.W."/>
            <person name="Maddocks D.G."/>
            <person name="Jablonski P.E."/>
            <person name="Krebs M.P."/>
            <person name="Angevine C.M."/>
            <person name="Dale H."/>
            <person name="Isenbarger T.A."/>
            <person name="Peck R.F."/>
            <person name="Pohlschroder M."/>
            <person name="Spudich J.L."/>
            <person name="Jung K.-H."/>
            <person name="Alam M."/>
            <person name="Freitas T."/>
            <person name="Hou S."/>
            <person name="Daniels C.J."/>
            <person name="Dennis P.P."/>
            <person name="Omer A.D."/>
            <person name="Ebhardt H."/>
            <person name="Lowe T.M."/>
            <person name="Liang P."/>
            <person name="Riley M."/>
            <person name="Hood L."/>
            <person name="DasSarma S."/>
        </authorList>
    </citation>
    <scope>NUCLEOTIDE SEQUENCE [LARGE SCALE GENOMIC DNA]</scope>
    <source>
        <strain>ATCC 700922 / JCM 11081 / NRC-1</strain>
    </source>
</reference>
<gene>
    <name evidence="1" type="primary">rpl40e</name>
    <name type="ordered locus">VNG_2076G</name>
</gene>